<gene>
    <name evidence="1" type="primary">tsaD</name>
    <name type="synonym">gcp</name>
    <name type="ordered locus">bbp_055</name>
</gene>
<comment type="function">
    <text evidence="1">Required for the formation of a threonylcarbamoyl group on adenosine at position 37 (t(6)A37) in tRNAs that read codons beginning with adenine. Is involved in the transfer of the threonylcarbamoyl moiety of threonylcarbamoyl-AMP (TC-AMP) to the N6 group of A37, together with TsaE and TsaB. TsaD likely plays a direct catalytic role in this reaction.</text>
</comment>
<comment type="catalytic activity">
    <reaction evidence="1">
        <text>L-threonylcarbamoyladenylate + adenosine(37) in tRNA = N(6)-L-threonylcarbamoyladenosine(37) in tRNA + AMP + H(+)</text>
        <dbReference type="Rhea" id="RHEA:37059"/>
        <dbReference type="Rhea" id="RHEA-COMP:10162"/>
        <dbReference type="Rhea" id="RHEA-COMP:10163"/>
        <dbReference type="ChEBI" id="CHEBI:15378"/>
        <dbReference type="ChEBI" id="CHEBI:73682"/>
        <dbReference type="ChEBI" id="CHEBI:74411"/>
        <dbReference type="ChEBI" id="CHEBI:74418"/>
        <dbReference type="ChEBI" id="CHEBI:456215"/>
        <dbReference type="EC" id="2.3.1.234"/>
    </reaction>
</comment>
<comment type="cofactor">
    <cofactor evidence="1">
        <name>Fe(2+)</name>
        <dbReference type="ChEBI" id="CHEBI:29033"/>
    </cofactor>
    <text evidence="1">Binds 1 Fe(2+) ion per subunit.</text>
</comment>
<comment type="subcellular location">
    <subcellularLocation>
        <location evidence="1">Cytoplasm</location>
    </subcellularLocation>
</comment>
<comment type="similarity">
    <text evidence="1">Belongs to the KAE1 / TsaD family.</text>
</comment>
<protein>
    <recommendedName>
        <fullName evidence="1">tRNA N6-adenosine threonylcarbamoyltransferase</fullName>
        <ecNumber evidence="1">2.3.1.234</ecNumber>
    </recommendedName>
    <alternativeName>
        <fullName evidence="1">N6-L-threonylcarbamoyladenine synthase</fullName>
        <shortName evidence="1">t(6)A synthase</shortName>
    </alternativeName>
    <alternativeName>
        <fullName evidence="1">t(6)A37 threonylcarbamoyladenosine biosynthesis protein TsaD</fullName>
    </alternativeName>
    <alternativeName>
        <fullName evidence="1">tRNA threonylcarbamoyladenosine biosynthesis protein TsaD</fullName>
    </alternativeName>
</protein>
<proteinExistence type="inferred from homology"/>
<reference key="1">
    <citation type="journal article" date="2003" name="Proc. Natl. Acad. Sci. U.S.A.">
        <title>Reductive genome evolution in Buchnera aphidicola.</title>
        <authorList>
            <person name="van Ham R.C.H.J."/>
            <person name="Kamerbeek J."/>
            <person name="Palacios C."/>
            <person name="Rausell C."/>
            <person name="Abascal F."/>
            <person name="Bastolla U."/>
            <person name="Fernandez J.M."/>
            <person name="Jimenez L."/>
            <person name="Postigo M."/>
            <person name="Silva F.J."/>
            <person name="Tamames J."/>
            <person name="Viguera E."/>
            <person name="Latorre A."/>
            <person name="Valencia A."/>
            <person name="Moran F."/>
            <person name="Moya A."/>
        </authorList>
    </citation>
    <scope>NUCLEOTIDE SEQUENCE [LARGE SCALE GENOMIC DNA]</scope>
    <source>
        <strain>Bp</strain>
    </source>
</reference>
<dbReference type="EC" id="2.3.1.234" evidence="1"/>
<dbReference type="EMBL" id="AE016826">
    <property type="protein sequence ID" value="AAO26794.1"/>
    <property type="molecule type" value="Genomic_DNA"/>
</dbReference>
<dbReference type="RefSeq" id="WP_011091195.1">
    <property type="nucleotide sequence ID" value="NC_004545.1"/>
</dbReference>
<dbReference type="SMR" id="Q89B07"/>
<dbReference type="STRING" id="224915.bbp_055"/>
<dbReference type="KEGG" id="bab:bbp_055"/>
<dbReference type="eggNOG" id="COG0533">
    <property type="taxonomic scope" value="Bacteria"/>
</dbReference>
<dbReference type="HOGENOM" id="CLU_023208_0_2_6"/>
<dbReference type="OrthoDB" id="9806197at2"/>
<dbReference type="Proteomes" id="UP000000601">
    <property type="component" value="Chromosome"/>
</dbReference>
<dbReference type="GO" id="GO:0005737">
    <property type="term" value="C:cytoplasm"/>
    <property type="evidence" value="ECO:0007669"/>
    <property type="project" value="UniProtKB-SubCell"/>
</dbReference>
<dbReference type="GO" id="GO:0005506">
    <property type="term" value="F:iron ion binding"/>
    <property type="evidence" value="ECO:0007669"/>
    <property type="project" value="UniProtKB-UniRule"/>
</dbReference>
<dbReference type="GO" id="GO:0061711">
    <property type="term" value="F:N(6)-L-threonylcarbamoyladenine synthase activity"/>
    <property type="evidence" value="ECO:0007669"/>
    <property type="project" value="UniProtKB-EC"/>
</dbReference>
<dbReference type="GO" id="GO:0002949">
    <property type="term" value="P:tRNA threonylcarbamoyladenosine modification"/>
    <property type="evidence" value="ECO:0007669"/>
    <property type="project" value="UniProtKB-UniRule"/>
</dbReference>
<dbReference type="CDD" id="cd24133">
    <property type="entry name" value="ASKHA_NBD_TsaD_bac"/>
    <property type="match status" value="1"/>
</dbReference>
<dbReference type="FunFam" id="3.30.420.40:FF:000040">
    <property type="entry name" value="tRNA N6-adenosine threonylcarbamoyltransferase"/>
    <property type="match status" value="1"/>
</dbReference>
<dbReference type="Gene3D" id="3.30.420.40">
    <property type="match status" value="2"/>
</dbReference>
<dbReference type="HAMAP" id="MF_01445">
    <property type="entry name" value="TsaD"/>
    <property type="match status" value="1"/>
</dbReference>
<dbReference type="InterPro" id="IPR043129">
    <property type="entry name" value="ATPase_NBD"/>
</dbReference>
<dbReference type="InterPro" id="IPR000905">
    <property type="entry name" value="Gcp-like_dom"/>
</dbReference>
<dbReference type="InterPro" id="IPR017861">
    <property type="entry name" value="KAE1/TsaD"/>
</dbReference>
<dbReference type="InterPro" id="IPR022450">
    <property type="entry name" value="TsaD"/>
</dbReference>
<dbReference type="NCBIfam" id="TIGR00329">
    <property type="entry name" value="gcp_kae1"/>
    <property type="match status" value="1"/>
</dbReference>
<dbReference type="NCBIfam" id="TIGR03723">
    <property type="entry name" value="T6A_TsaD_YgjD"/>
    <property type="match status" value="1"/>
</dbReference>
<dbReference type="PANTHER" id="PTHR11735">
    <property type="entry name" value="TRNA N6-ADENOSINE THREONYLCARBAMOYLTRANSFERASE"/>
    <property type="match status" value="1"/>
</dbReference>
<dbReference type="PANTHER" id="PTHR11735:SF6">
    <property type="entry name" value="TRNA N6-ADENOSINE THREONYLCARBAMOYLTRANSFERASE, MITOCHONDRIAL"/>
    <property type="match status" value="1"/>
</dbReference>
<dbReference type="Pfam" id="PF00814">
    <property type="entry name" value="TsaD"/>
    <property type="match status" value="1"/>
</dbReference>
<dbReference type="PRINTS" id="PR00789">
    <property type="entry name" value="OSIALOPTASE"/>
</dbReference>
<dbReference type="SUPFAM" id="SSF53067">
    <property type="entry name" value="Actin-like ATPase domain"/>
    <property type="match status" value="2"/>
</dbReference>
<evidence type="ECO:0000255" key="1">
    <source>
        <dbReference type="HAMAP-Rule" id="MF_01445"/>
    </source>
</evidence>
<name>TSAD_BUCBP</name>
<accession>Q89B07</accession>
<feature type="chain" id="PRO_0000096961" description="tRNA N6-adenosine threonylcarbamoyltransferase">
    <location>
        <begin position="1"/>
        <end position="338"/>
    </location>
</feature>
<feature type="binding site" evidence="1">
    <location>
        <position position="112"/>
    </location>
    <ligand>
        <name>Fe cation</name>
        <dbReference type="ChEBI" id="CHEBI:24875"/>
    </ligand>
</feature>
<feature type="binding site" evidence="1">
    <location>
        <position position="116"/>
    </location>
    <ligand>
        <name>Fe cation</name>
        <dbReference type="ChEBI" id="CHEBI:24875"/>
    </ligand>
</feature>
<feature type="binding site" evidence="1">
    <location>
        <begin position="135"/>
        <end position="139"/>
    </location>
    <ligand>
        <name>substrate</name>
    </ligand>
</feature>
<feature type="binding site" evidence="1">
    <location>
        <position position="168"/>
    </location>
    <ligand>
        <name>substrate</name>
    </ligand>
</feature>
<feature type="binding site" evidence="1">
    <location>
        <position position="181"/>
    </location>
    <ligand>
        <name>substrate</name>
    </ligand>
</feature>
<feature type="binding site" evidence="1">
    <location>
        <position position="273"/>
    </location>
    <ligand>
        <name>substrate</name>
    </ligand>
</feature>
<feature type="binding site" evidence="1">
    <location>
        <position position="301"/>
    </location>
    <ligand>
        <name>Fe cation</name>
        <dbReference type="ChEBI" id="CHEBI:24875"/>
    </ligand>
</feature>
<sequence length="338" mass="37140">MTCILGIETSCDDTCVAVYDTNNGVIFNQVYSQSQLYNYYGGIVPEFSARKHLEILIVLLKNIFKKGKISKNLIDAVAYTAGPGLVGSLLVGASVGTALAYSLKVPVVLVNHMEAHLLTPMLENIKPTFPFLALLVSGGHTQLINALGIGEYELLGETLDDAVGEAFDKVAQALGLGYPGGSNLSKLARSGIPGTFNFPRPMINNSNLNFSFSGLKTFVLNIIQKNNNDFQIKANIAREFENAVVDSLVIKCIRALKKLKYTTLVVSGGVSKNDVLRMHINRIIKQYNYKVFYSHLKYCSDNAAMIAYVGSIRYKKFKSLNLEIKINPNWSIVDLAKI</sequence>
<organism>
    <name type="scientific">Buchnera aphidicola subsp. Baizongia pistaciae (strain Bp)</name>
    <dbReference type="NCBI Taxonomy" id="224915"/>
    <lineage>
        <taxon>Bacteria</taxon>
        <taxon>Pseudomonadati</taxon>
        <taxon>Pseudomonadota</taxon>
        <taxon>Gammaproteobacteria</taxon>
        <taxon>Enterobacterales</taxon>
        <taxon>Erwiniaceae</taxon>
        <taxon>Buchnera</taxon>
    </lineage>
</organism>
<keyword id="KW-0012">Acyltransferase</keyword>
<keyword id="KW-0963">Cytoplasm</keyword>
<keyword id="KW-0408">Iron</keyword>
<keyword id="KW-0479">Metal-binding</keyword>
<keyword id="KW-1185">Reference proteome</keyword>
<keyword id="KW-0808">Transferase</keyword>
<keyword id="KW-0819">tRNA processing</keyword>